<protein>
    <recommendedName>
        <fullName evidence="8">Cytochrome P450 monooxygenase ltmK</fullName>
        <ecNumber evidence="10">1.-.-.-</ecNumber>
    </recommendedName>
    <alternativeName>
        <fullName evidence="8">Lolitrem B biosynthesis cluster 1 protein K</fullName>
    </alternativeName>
</protein>
<dbReference type="EC" id="1.-.-.-" evidence="10"/>
<dbReference type="EMBL" id="AY742905">
    <property type="protein sequence ID" value="AAW88516.1"/>
    <property type="molecule type" value="Genomic_DNA"/>
</dbReference>
<dbReference type="SMR" id="Q56RZ1"/>
<dbReference type="GlyCosmos" id="Q56RZ1">
    <property type="glycosylation" value="2 sites, No reported glycans"/>
</dbReference>
<dbReference type="KEGG" id="ag:AAW88516"/>
<dbReference type="BioCyc" id="MetaCyc:MONOMER-18984"/>
<dbReference type="GO" id="GO:0016020">
    <property type="term" value="C:membrane"/>
    <property type="evidence" value="ECO:0007669"/>
    <property type="project" value="UniProtKB-SubCell"/>
</dbReference>
<dbReference type="GO" id="GO:0020037">
    <property type="term" value="F:heme binding"/>
    <property type="evidence" value="ECO:0007669"/>
    <property type="project" value="InterPro"/>
</dbReference>
<dbReference type="GO" id="GO:0005506">
    <property type="term" value="F:iron ion binding"/>
    <property type="evidence" value="ECO:0007669"/>
    <property type="project" value="InterPro"/>
</dbReference>
<dbReference type="GO" id="GO:0004497">
    <property type="term" value="F:monooxygenase activity"/>
    <property type="evidence" value="ECO:0007669"/>
    <property type="project" value="UniProtKB-KW"/>
</dbReference>
<dbReference type="GO" id="GO:0016705">
    <property type="term" value="F:oxidoreductase activity, acting on paired donors, with incorporation or reduction of molecular oxygen"/>
    <property type="evidence" value="ECO:0007669"/>
    <property type="project" value="InterPro"/>
</dbReference>
<dbReference type="GO" id="GO:0019748">
    <property type="term" value="P:secondary metabolic process"/>
    <property type="evidence" value="ECO:0007669"/>
    <property type="project" value="UniProtKB-ARBA"/>
</dbReference>
<dbReference type="CDD" id="cd11041">
    <property type="entry name" value="CYP503A1-like"/>
    <property type="match status" value="1"/>
</dbReference>
<dbReference type="Gene3D" id="1.10.630.10">
    <property type="entry name" value="Cytochrome P450"/>
    <property type="match status" value="1"/>
</dbReference>
<dbReference type="InterPro" id="IPR001128">
    <property type="entry name" value="Cyt_P450"/>
</dbReference>
<dbReference type="InterPro" id="IPR002403">
    <property type="entry name" value="Cyt_P450_E_grp-IV"/>
</dbReference>
<dbReference type="InterPro" id="IPR036396">
    <property type="entry name" value="Cyt_P450_sf"/>
</dbReference>
<dbReference type="PANTHER" id="PTHR46206">
    <property type="entry name" value="CYTOCHROME P450"/>
    <property type="match status" value="1"/>
</dbReference>
<dbReference type="PANTHER" id="PTHR46206:SF4">
    <property type="entry name" value="P450, PUTATIVE (EUROFUNG)-RELATED"/>
    <property type="match status" value="1"/>
</dbReference>
<dbReference type="Pfam" id="PF00067">
    <property type="entry name" value="p450"/>
    <property type="match status" value="1"/>
</dbReference>
<dbReference type="PRINTS" id="PR00465">
    <property type="entry name" value="EP450IV"/>
</dbReference>
<dbReference type="SUPFAM" id="SSF48264">
    <property type="entry name" value="Cytochrome P450"/>
    <property type="match status" value="1"/>
</dbReference>
<name>LTMK_EPIFF</name>
<gene>
    <name evidence="8" type="primary">ltmK</name>
</gene>
<keyword id="KW-0325">Glycoprotein</keyword>
<keyword id="KW-0349">Heme</keyword>
<keyword id="KW-0408">Iron</keyword>
<keyword id="KW-0472">Membrane</keyword>
<keyword id="KW-0479">Metal-binding</keyword>
<keyword id="KW-0503">Monooxygenase</keyword>
<keyword id="KW-0560">Oxidoreductase</keyword>
<keyword id="KW-0812">Transmembrane</keyword>
<keyword id="KW-1133">Transmembrane helix</keyword>
<reference key="1">
    <citation type="journal article" date="2005" name="Mol. Genet. Genomics">
        <title>Molecular cloning and genetic analysis of a symbiosis-expressed gene cluster for lolitrem biosynthesis from a mutualistic endophyte of perennial ryegrass.</title>
        <authorList>
            <person name="Young C.A."/>
            <person name="Bryant M.K."/>
            <person name="Christensen M.J."/>
            <person name="Tapper B.A."/>
            <person name="Bryan G.T."/>
            <person name="Scott B."/>
        </authorList>
    </citation>
    <scope>NUCLEOTIDE SEQUENCE [GENOMIC DNA]</scope>
    <source>
        <strain>Fl1</strain>
    </source>
</reference>
<reference key="2">
    <citation type="journal article" date="2006" name="Fungal Genet. Biol.">
        <title>A complex gene cluster for indole-diterpene biosynthesis in the grass endophyte Neotyphodium lolii.</title>
        <authorList>
            <person name="Young C.A."/>
            <person name="Felitti S."/>
            <person name="Shields K."/>
            <person name="Spangenberg G."/>
            <person name="Johnson R.D."/>
            <person name="Bryan G.T."/>
            <person name="Saikia S."/>
            <person name="Scott B."/>
        </authorList>
    </citation>
    <scope>FUNCTION</scope>
</reference>
<reference key="3">
    <citation type="journal article" date="2010" name="Plant Physiol.">
        <title>Disruption of signaling in a fungal-grass symbiosis leads to pathogenesis.</title>
        <authorList>
            <person name="Eaton C.J."/>
            <person name="Cox M.P."/>
            <person name="Ambrose B."/>
            <person name="Becker M."/>
            <person name="Hesse U."/>
            <person name="Schardl C.L."/>
            <person name="Scott B."/>
        </authorList>
    </citation>
    <scope>INDUCTION</scope>
</reference>
<reference key="4">
    <citation type="journal article" date="2012" name="FEBS Lett.">
        <title>Functional analysis of an indole-diterpene gene cluster for lolitrem B biosynthesis in the grass endosymbiont Epichloe festucae.</title>
        <authorList>
            <person name="Saikia S."/>
            <person name="Takemoto D."/>
            <person name="Tapper B.A."/>
            <person name="Lane G.A."/>
            <person name="Fraser K."/>
            <person name="Scott B."/>
        </authorList>
    </citation>
    <scope>FUNCTION</scope>
    <scope>DISRUPTION PHENOTYPE</scope>
    <scope>PATHWAY</scope>
</reference>
<evidence type="ECO:0000250" key="1">
    <source>
        <dbReference type="UniProtKB" id="P04798"/>
    </source>
</evidence>
<evidence type="ECO:0000255" key="2"/>
<evidence type="ECO:0000255" key="3">
    <source>
        <dbReference type="PROSITE-ProRule" id="PRU00498"/>
    </source>
</evidence>
<evidence type="ECO:0000269" key="4">
    <source>
    </source>
</evidence>
<evidence type="ECO:0000269" key="5">
    <source>
    </source>
</evidence>
<evidence type="ECO:0000269" key="6">
    <source>
    </source>
</evidence>
<evidence type="ECO:0000269" key="7">
    <source>
    </source>
</evidence>
<evidence type="ECO:0000303" key="8">
    <source>
    </source>
</evidence>
<evidence type="ECO:0000305" key="9"/>
<evidence type="ECO:0000305" key="10">
    <source>
    </source>
</evidence>
<organism>
    <name type="scientific">Epichloe festucae (strain Fl1)</name>
    <dbReference type="NCBI Taxonomy" id="877507"/>
    <lineage>
        <taxon>Eukaryota</taxon>
        <taxon>Fungi</taxon>
        <taxon>Dikarya</taxon>
        <taxon>Ascomycota</taxon>
        <taxon>Pezizomycotina</taxon>
        <taxon>Sordariomycetes</taxon>
        <taxon>Hypocreomycetidae</taxon>
        <taxon>Hypocreales</taxon>
        <taxon>Clavicipitaceae</taxon>
        <taxon>Epichloe</taxon>
    </lineage>
</organism>
<feature type="chain" id="PRO_0000444331" description="Cytochrome P450 monooxygenase ltmK">
    <location>
        <begin position="1"/>
        <end position="533"/>
    </location>
</feature>
<feature type="transmembrane region" description="Helical" evidence="2">
    <location>
        <begin position="27"/>
        <end position="47"/>
    </location>
</feature>
<feature type="binding site" description="axial binding residue" evidence="1">
    <location>
        <position position="473"/>
    </location>
    <ligand>
        <name>heme</name>
        <dbReference type="ChEBI" id="CHEBI:30413"/>
    </ligand>
    <ligandPart>
        <name>Fe</name>
        <dbReference type="ChEBI" id="CHEBI:18248"/>
    </ligandPart>
</feature>
<feature type="glycosylation site" description="N-linked (GlcNAc...) asparagine" evidence="3">
    <location>
        <position position="116"/>
    </location>
</feature>
<feature type="glycosylation site" description="N-linked (GlcNAc...) asparagine" evidence="3">
    <location>
        <position position="528"/>
    </location>
</feature>
<proteinExistence type="evidence at transcript level"/>
<comment type="function">
    <text evidence="4 5 7">Cytochrome P450 monooxygenase; part of the gene clusters that mediates the biosynthesis of lolitrems, indole-diterpene mycotoxins that are potent tremorgens in mammals, and are synthesized by clavicipitaceous fungal endophytes in association with their grass hosts (PubMed:16765617, PubMed:22750140). The geranylgeranyl diphosphate (GGPP) synthase ltmG is proposed to catalyze the first step in lolitrem biosynthesis (PubMed:15991026, PubMed:16765617). LtmG catalyzes a series of iterative condensations of isopentenyl diphosphate (IPP) with dimethylallyl diphosphate (DMAPP), geranyl diphosphate (GPP), and farnesyl diphosphate (FPP), to form GGPP (PubMed:15991026, PubMed:16765617). GGPP then condenses with indole-3-glycerol phosphate to form 3-geranylgeranylindole, an acyclic intermediate, to be incorporated into paxilline (PubMed:16765617). Either ltmG or ltmC could be responsible for this step, as both are putative prenyl transferases (PubMed:16765617). The FAD-dependent monooxygenase ltmM then catalyzes the epoxidation of the two terminal alkenes of the geranylgeranyl moiety, which is subsequently cyclized by ltmB, to paspaline (PubMed:15991026, PubMed:16765617). The cytochrome P450 monooxygenases ltmQ and ltmP can sequentially oxidize paspaline to terpendole E and terpendole F (PubMed:22750140). Alternatively, ltmP converts paspaline to an intermediate which is oxidized by ltmQ to terpendole F (PubMed:22750140). LtmF, ltmK, ltmE and ltmJ appear to be unique to the epichloe endophytes (PubMed:15991026, PubMed:16765617). The prenyltransferase ltmF is involved in the 27-hydroxyl-O-prenylation (PubMed:22750140). The cytochrome P450 monooxygenase ltmK is required for the oxidative acetal ring formation (PubMed:22750140). The multi-functional prenyltransferase ltmE is required for C20- and C21-prenylations of the indole ring of paspalanes and acts together with the cytochrome P450 monooxygenase ltmJ to yield lolitremanes by multiple oxidations and ring closures (PubMed:22750140). The stereoisomer pairs of lolitriol and lolitrem N or lolitrem B and lolitrem F may be attributed to variations in the way in which ring closure can occur under the action of ltmJ (PubMed:22750140). While the major product of this pathway is lolitrem B, the prenyl transferases and cytochrome P450 monooxygenases identified in this pathway have a remarkable versatility in their regio- and stereo-specificities to generate a diverse range of metabolites that are products of a metabolic grid rather than a linear pathway (PubMed:22750140).</text>
</comment>
<comment type="cofactor">
    <cofactor evidence="1">
        <name>heme</name>
        <dbReference type="ChEBI" id="CHEBI:30413"/>
    </cofactor>
</comment>
<comment type="pathway">
    <text evidence="7">Secondary metabolite biosynthesis.</text>
</comment>
<comment type="subcellular location">
    <subcellularLocation>
        <location evidence="2">Membrane</location>
        <topology evidence="2">Single-pass membrane protein</topology>
    </subcellularLocation>
</comment>
<comment type="induction">
    <text evidence="6">Expression is down-regulated when the stress-activated mitogen-activated protein kinase (sakA) is deleted (PubMed:20519633).</text>
</comment>
<comment type="disruption phenotype">
    <text evidence="7">Does not produce lolitrem B and terpendole C, but accumulates lolitrem E and two other paspalanes, IDT522 and IDT538 (PubMed:22750140).</text>
</comment>
<comment type="similarity">
    <text evidence="9">Belongs to the cytochrome P450 family.</text>
</comment>
<sequence>MQYGNLTTVLLLRNTLLSLNSSSICHVHWLQVIVALLVLIVCIFLYWRTPTGINAPFAGYRSPWEPPLLVQMRYVFNAASMIREGYAKWKDSLFQISRYDGDILIVPPRYLDDLHNKSQEELSAIYGLIRNFGGSYSGITLLGENDVGIRALQTKITPNLAKLCDDIRDEFQYCLDTDFPACRDWTSVSVHPLFLKAVERITHRIFVGLPLCRNPQWVQATSKHAHYATMIQIAMRSVPKFIQPLLNFCLPWPWKNAACVREAKNALILEMQRRRNLEKVNSFDYIKSNDLLQAVMEMSSPSHEDSQLDVVAQIMLTMNTIAGHSTAASGAHALFDMVSHSKYIELLREEALQVFRHVELRVTKQALGDLRKLDSFLRESQRHNPLSLLGFFRVVLDPAGITLQDGTHVPYNTLLCVAPHAISNDPDVIEDPTSFNGLRYYEQRCRDASQEKKHQYATTDKSHLHFGYGTWACPGRFLASDMLKVILTMLLLQYDIRSPERAKRPVAGHFHEFPLFNINTPLLMKRRNDSLVL</sequence>
<accession>Q56RZ1</accession>